<accession>B2SBS0</accession>
<proteinExistence type="inferred from homology"/>
<name>MINE_BRUA1</name>
<dbReference type="EMBL" id="CP000888">
    <property type="protein sequence ID" value="ACD74307.1"/>
    <property type="molecule type" value="Genomic_DNA"/>
</dbReference>
<dbReference type="RefSeq" id="WP_002966267.1">
    <property type="nucleotide sequence ID" value="NC_010740.1"/>
</dbReference>
<dbReference type="SMR" id="B2SBS0"/>
<dbReference type="GeneID" id="97535514"/>
<dbReference type="KEGG" id="bmc:BAbS19_II08140"/>
<dbReference type="HOGENOM" id="CLU_137929_2_0_5"/>
<dbReference type="Proteomes" id="UP000002565">
    <property type="component" value="Chromosome 2"/>
</dbReference>
<dbReference type="GO" id="GO:0051301">
    <property type="term" value="P:cell division"/>
    <property type="evidence" value="ECO:0007669"/>
    <property type="project" value="UniProtKB-KW"/>
</dbReference>
<dbReference type="GO" id="GO:0032955">
    <property type="term" value="P:regulation of division septum assembly"/>
    <property type="evidence" value="ECO:0007669"/>
    <property type="project" value="InterPro"/>
</dbReference>
<dbReference type="Gene3D" id="3.30.1070.10">
    <property type="entry name" value="Cell division topological specificity factor MinE"/>
    <property type="match status" value="1"/>
</dbReference>
<dbReference type="HAMAP" id="MF_00262">
    <property type="entry name" value="MinE"/>
    <property type="match status" value="1"/>
</dbReference>
<dbReference type="InterPro" id="IPR005527">
    <property type="entry name" value="MinE"/>
</dbReference>
<dbReference type="InterPro" id="IPR036707">
    <property type="entry name" value="MinE_sf"/>
</dbReference>
<dbReference type="NCBIfam" id="TIGR01215">
    <property type="entry name" value="minE"/>
    <property type="match status" value="1"/>
</dbReference>
<dbReference type="NCBIfam" id="NF001422">
    <property type="entry name" value="PRK00296.1"/>
    <property type="match status" value="1"/>
</dbReference>
<dbReference type="Pfam" id="PF03776">
    <property type="entry name" value="MinE"/>
    <property type="match status" value="1"/>
</dbReference>
<dbReference type="SUPFAM" id="SSF55229">
    <property type="entry name" value="Cell division protein MinE topological specificity domain"/>
    <property type="match status" value="1"/>
</dbReference>
<feature type="chain" id="PRO_1000114203" description="Cell division topological specificity factor">
    <location>
        <begin position="1"/>
        <end position="90"/>
    </location>
</feature>
<comment type="function">
    <text evidence="1">Prevents the cell division inhibition by proteins MinC and MinD at internal division sites while permitting inhibition at polar sites. This ensures cell division at the proper site by restricting the formation of a division septum at the midpoint of the long axis of the cell.</text>
</comment>
<comment type="similarity">
    <text evidence="1">Belongs to the MinE family.</text>
</comment>
<protein>
    <recommendedName>
        <fullName evidence="1">Cell division topological specificity factor</fullName>
    </recommendedName>
</protein>
<gene>
    <name evidence="1" type="primary">minE</name>
    <name type="ordered locus">BAbS19_II08140</name>
</gene>
<keyword id="KW-0131">Cell cycle</keyword>
<keyword id="KW-0132">Cell division</keyword>
<reference key="1">
    <citation type="journal article" date="2008" name="PLoS ONE">
        <title>Genome sequence of Brucella abortus vaccine strain S19 compared to virulent strains yields candidate virulence genes.</title>
        <authorList>
            <person name="Crasta O.R."/>
            <person name="Folkerts O."/>
            <person name="Fei Z."/>
            <person name="Mane S.P."/>
            <person name="Evans C."/>
            <person name="Martino-Catt S."/>
            <person name="Bricker B."/>
            <person name="Yu G."/>
            <person name="Du L."/>
            <person name="Sobral B.W."/>
        </authorList>
    </citation>
    <scope>NUCLEOTIDE SEQUENCE [LARGE SCALE GENOMIC DNA]</scope>
    <source>
        <strain>S19</strain>
    </source>
</reference>
<organism>
    <name type="scientific">Brucella abortus (strain S19)</name>
    <dbReference type="NCBI Taxonomy" id="430066"/>
    <lineage>
        <taxon>Bacteria</taxon>
        <taxon>Pseudomonadati</taxon>
        <taxon>Pseudomonadota</taxon>
        <taxon>Alphaproteobacteria</taxon>
        <taxon>Hyphomicrobiales</taxon>
        <taxon>Brucellaceae</taxon>
        <taxon>Brucella/Ochrobactrum group</taxon>
        <taxon>Brucella</taxon>
    </lineage>
</organism>
<sequence length="90" mass="10089">MSIFRFFTRQQASAPQARERLQVLLAHERASYGGQSDLVAVLREEILAVIAKHIKVDREKVSVKMDRGDQVSTLEVDIELPLTAKKGRAA</sequence>
<evidence type="ECO:0000255" key="1">
    <source>
        <dbReference type="HAMAP-Rule" id="MF_00262"/>
    </source>
</evidence>